<reference key="1">
    <citation type="journal article" date="2001" name="Nature">
        <title>Complete genome sequence of a multiple drug resistant Salmonella enterica serovar Typhi CT18.</title>
        <authorList>
            <person name="Parkhill J."/>
            <person name="Dougan G."/>
            <person name="James K.D."/>
            <person name="Thomson N.R."/>
            <person name="Pickard D."/>
            <person name="Wain J."/>
            <person name="Churcher C.M."/>
            <person name="Mungall K.L."/>
            <person name="Bentley S.D."/>
            <person name="Holden M.T.G."/>
            <person name="Sebaihia M."/>
            <person name="Baker S."/>
            <person name="Basham D."/>
            <person name="Brooks K."/>
            <person name="Chillingworth T."/>
            <person name="Connerton P."/>
            <person name="Cronin A."/>
            <person name="Davis P."/>
            <person name="Davies R.M."/>
            <person name="Dowd L."/>
            <person name="White N."/>
            <person name="Farrar J."/>
            <person name="Feltwell T."/>
            <person name="Hamlin N."/>
            <person name="Haque A."/>
            <person name="Hien T.T."/>
            <person name="Holroyd S."/>
            <person name="Jagels K."/>
            <person name="Krogh A."/>
            <person name="Larsen T.S."/>
            <person name="Leather S."/>
            <person name="Moule S."/>
            <person name="O'Gaora P."/>
            <person name="Parry C."/>
            <person name="Quail M.A."/>
            <person name="Rutherford K.M."/>
            <person name="Simmonds M."/>
            <person name="Skelton J."/>
            <person name="Stevens K."/>
            <person name="Whitehead S."/>
            <person name="Barrell B.G."/>
        </authorList>
    </citation>
    <scope>NUCLEOTIDE SEQUENCE [LARGE SCALE GENOMIC DNA]</scope>
    <source>
        <strain>CT18</strain>
    </source>
</reference>
<reference key="2">
    <citation type="journal article" date="2003" name="J. Bacteriol.">
        <title>Comparative genomics of Salmonella enterica serovar Typhi strains Ty2 and CT18.</title>
        <authorList>
            <person name="Deng W."/>
            <person name="Liou S.-R."/>
            <person name="Plunkett G. III"/>
            <person name="Mayhew G.F."/>
            <person name="Rose D.J."/>
            <person name="Burland V."/>
            <person name="Kodoyianni V."/>
            <person name="Schwartz D.C."/>
            <person name="Blattner F.R."/>
        </authorList>
    </citation>
    <scope>NUCLEOTIDE SEQUENCE [LARGE SCALE GENOMIC DNA]</scope>
    <source>
        <strain>ATCC 700931 / Ty2</strain>
    </source>
</reference>
<evidence type="ECO:0000255" key="1">
    <source>
        <dbReference type="HAMAP-Rule" id="MF_00013"/>
    </source>
</evidence>
<evidence type="ECO:0000255" key="2">
    <source>
        <dbReference type="PROSITE-ProRule" id="PRU01067"/>
    </source>
</evidence>
<evidence type="ECO:0000305" key="3"/>
<keyword id="KW-0012">Acyltransferase</keyword>
<keyword id="KW-0963">Cytoplasm</keyword>
<keyword id="KW-0808">Transferase</keyword>
<organism>
    <name type="scientific">Salmonella typhi</name>
    <dbReference type="NCBI Taxonomy" id="90370"/>
    <lineage>
        <taxon>Bacteria</taxon>
        <taxon>Pseudomonadati</taxon>
        <taxon>Pseudomonadota</taxon>
        <taxon>Gammaproteobacteria</taxon>
        <taxon>Enterobacterales</taxon>
        <taxon>Enterobacteriaceae</taxon>
        <taxon>Salmonella</taxon>
    </lineage>
</organism>
<gene>
    <name evidence="1" type="primary">lipB</name>
    <name type="ordered locus">STY0686</name>
    <name type="ordered locus">t2232</name>
</gene>
<comment type="function">
    <text evidence="1">Catalyzes the transfer of endogenously produced octanoic acid from octanoyl-acyl-carrier-protein onto the lipoyl domains of lipoate-dependent enzymes. Lipoyl-ACP can also act as a substrate although octanoyl-ACP is likely to be the physiological substrate.</text>
</comment>
<comment type="catalytic activity">
    <reaction evidence="1">
        <text>octanoyl-[ACP] + L-lysyl-[protein] = N(6)-octanoyl-L-lysyl-[protein] + holo-[ACP] + H(+)</text>
        <dbReference type="Rhea" id="RHEA:17665"/>
        <dbReference type="Rhea" id="RHEA-COMP:9636"/>
        <dbReference type="Rhea" id="RHEA-COMP:9685"/>
        <dbReference type="Rhea" id="RHEA-COMP:9752"/>
        <dbReference type="Rhea" id="RHEA-COMP:9928"/>
        <dbReference type="ChEBI" id="CHEBI:15378"/>
        <dbReference type="ChEBI" id="CHEBI:29969"/>
        <dbReference type="ChEBI" id="CHEBI:64479"/>
        <dbReference type="ChEBI" id="CHEBI:78463"/>
        <dbReference type="ChEBI" id="CHEBI:78809"/>
        <dbReference type="EC" id="2.3.1.181"/>
    </reaction>
</comment>
<comment type="pathway">
    <text evidence="1">Protein modification; protein lipoylation via endogenous pathway; protein N(6)-(lipoyl)lysine from octanoyl-[acyl-carrier-protein]: step 1/2.</text>
</comment>
<comment type="subcellular location">
    <subcellularLocation>
        <location evidence="1">Cytoplasm</location>
    </subcellularLocation>
</comment>
<comment type="miscellaneous">
    <text evidence="1">In the reaction, the free carboxyl group of octanoic acid is attached via an amide linkage to the epsilon-amino group of a specific lysine residue of lipoyl domains of lipoate-dependent enzymes.</text>
</comment>
<comment type="similarity">
    <text evidence="1">Belongs to the LipB family.</text>
</comment>
<comment type="sequence caution" evidence="3">
    <conflict type="erroneous initiation">
        <sequence resource="EMBL-CDS" id="AAO69835"/>
    </conflict>
    <text>Truncated N-terminus.</text>
</comment>
<comment type="sequence caution" evidence="3">
    <conflict type="erroneous initiation">
        <sequence resource="EMBL-CDS" id="CAD05112"/>
    </conflict>
    <text>Truncated N-terminus.</text>
</comment>
<name>LIPB_SALTI</name>
<sequence length="213" mass="23886">MYQDKILVRQLGLQPYEAISQAMHNFTDMRDENSHDEIWLVEHYPVFTQGQAGKAEHILMPGDIPVVQSDRGGQVTYHGPGQQVMYVLLNLKRRKLGVRDLVTLLEQTVVNTLAEMGIEAHPRADAPGVYVGEKKICSLGLRIRRGCSFHGLALNVNMDLSPFLRINPCGYAGMEMAKITQWKEDATTDNIAPRLLANILALLNNPPYEYIAT</sequence>
<feature type="chain" id="PRO_0000062876" description="Octanoyltransferase">
    <location>
        <begin position="1"/>
        <end position="213"/>
    </location>
</feature>
<feature type="domain" description="BPL/LPL catalytic" evidence="2">
    <location>
        <begin position="32"/>
        <end position="207"/>
    </location>
</feature>
<feature type="active site" description="Acyl-thioester intermediate" evidence="1">
    <location>
        <position position="169"/>
    </location>
</feature>
<feature type="binding site" evidence="1">
    <location>
        <begin position="71"/>
        <end position="78"/>
    </location>
    <ligand>
        <name>substrate</name>
    </ligand>
</feature>
<feature type="binding site" evidence="1">
    <location>
        <begin position="138"/>
        <end position="140"/>
    </location>
    <ligand>
        <name>substrate</name>
    </ligand>
</feature>
<feature type="binding site" evidence="1">
    <location>
        <begin position="151"/>
        <end position="153"/>
    </location>
    <ligand>
        <name>substrate</name>
    </ligand>
</feature>
<feature type="site" description="Lowers pKa of active site Cys" evidence="1">
    <location>
        <position position="135"/>
    </location>
</feature>
<accession>Q8Z8I2</accession>
<dbReference type="EC" id="2.3.1.181" evidence="1"/>
<dbReference type="EMBL" id="AL513382">
    <property type="protein sequence ID" value="CAD05112.1"/>
    <property type="status" value="ALT_INIT"/>
    <property type="molecule type" value="Genomic_DNA"/>
</dbReference>
<dbReference type="EMBL" id="AE014613">
    <property type="protein sequence ID" value="AAO69835.1"/>
    <property type="status" value="ALT_INIT"/>
    <property type="molecule type" value="Genomic_DNA"/>
</dbReference>
<dbReference type="RefSeq" id="NP_455211.3">
    <property type="nucleotide sequence ID" value="NC_003198.1"/>
</dbReference>
<dbReference type="RefSeq" id="WP_000284017.1">
    <property type="nucleotide sequence ID" value="NZ_WSUR01000015.1"/>
</dbReference>
<dbReference type="SMR" id="Q8Z8I2"/>
<dbReference type="STRING" id="220341.gene:17584693"/>
<dbReference type="KEGG" id="stt:t2232"/>
<dbReference type="KEGG" id="sty:STY0686"/>
<dbReference type="PATRIC" id="fig|220341.7.peg.689"/>
<dbReference type="eggNOG" id="COG0321">
    <property type="taxonomic scope" value="Bacteria"/>
</dbReference>
<dbReference type="HOGENOM" id="CLU_035168_3_1_6"/>
<dbReference type="OMA" id="GEVTYHC"/>
<dbReference type="OrthoDB" id="9787061at2"/>
<dbReference type="UniPathway" id="UPA00538">
    <property type="reaction ID" value="UER00592"/>
</dbReference>
<dbReference type="Proteomes" id="UP000000541">
    <property type="component" value="Chromosome"/>
</dbReference>
<dbReference type="Proteomes" id="UP000002670">
    <property type="component" value="Chromosome"/>
</dbReference>
<dbReference type="GO" id="GO:0005737">
    <property type="term" value="C:cytoplasm"/>
    <property type="evidence" value="ECO:0007669"/>
    <property type="project" value="UniProtKB-SubCell"/>
</dbReference>
<dbReference type="GO" id="GO:0033819">
    <property type="term" value="F:lipoyl(octanoyl) transferase activity"/>
    <property type="evidence" value="ECO:0007669"/>
    <property type="project" value="UniProtKB-EC"/>
</dbReference>
<dbReference type="GO" id="GO:0036211">
    <property type="term" value="P:protein modification process"/>
    <property type="evidence" value="ECO:0007669"/>
    <property type="project" value="InterPro"/>
</dbReference>
<dbReference type="CDD" id="cd16444">
    <property type="entry name" value="LipB"/>
    <property type="match status" value="1"/>
</dbReference>
<dbReference type="FunFam" id="3.30.930.10:FF:000020">
    <property type="entry name" value="Octanoyltransferase"/>
    <property type="match status" value="1"/>
</dbReference>
<dbReference type="Gene3D" id="3.30.930.10">
    <property type="entry name" value="Bira Bifunctional Protein, Domain 2"/>
    <property type="match status" value="1"/>
</dbReference>
<dbReference type="HAMAP" id="MF_00013">
    <property type="entry name" value="LipB"/>
    <property type="match status" value="1"/>
</dbReference>
<dbReference type="InterPro" id="IPR045864">
    <property type="entry name" value="aa-tRNA-synth_II/BPL/LPL"/>
</dbReference>
<dbReference type="InterPro" id="IPR004143">
    <property type="entry name" value="BPL_LPL_catalytic"/>
</dbReference>
<dbReference type="InterPro" id="IPR000544">
    <property type="entry name" value="Octanoyltransferase"/>
</dbReference>
<dbReference type="InterPro" id="IPR020605">
    <property type="entry name" value="Octanoyltransferase_CS"/>
</dbReference>
<dbReference type="NCBIfam" id="TIGR00214">
    <property type="entry name" value="lipB"/>
    <property type="match status" value="1"/>
</dbReference>
<dbReference type="NCBIfam" id="NF010922">
    <property type="entry name" value="PRK14342.1"/>
    <property type="match status" value="1"/>
</dbReference>
<dbReference type="PANTHER" id="PTHR10993:SF7">
    <property type="entry name" value="LIPOYLTRANSFERASE 2, MITOCHONDRIAL-RELATED"/>
    <property type="match status" value="1"/>
</dbReference>
<dbReference type="PANTHER" id="PTHR10993">
    <property type="entry name" value="OCTANOYLTRANSFERASE"/>
    <property type="match status" value="1"/>
</dbReference>
<dbReference type="Pfam" id="PF21948">
    <property type="entry name" value="LplA-B_cat"/>
    <property type="match status" value="1"/>
</dbReference>
<dbReference type="PIRSF" id="PIRSF016262">
    <property type="entry name" value="LPLase"/>
    <property type="match status" value="1"/>
</dbReference>
<dbReference type="SUPFAM" id="SSF55681">
    <property type="entry name" value="Class II aaRS and biotin synthetases"/>
    <property type="match status" value="1"/>
</dbReference>
<dbReference type="PROSITE" id="PS51733">
    <property type="entry name" value="BPL_LPL_CATALYTIC"/>
    <property type="match status" value="1"/>
</dbReference>
<dbReference type="PROSITE" id="PS01313">
    <property type="entry name" value="LIPB"/>
    <property type="match status" value="1"/>
</dbReference>
<proteinExistence type="inferred from homology"/>
<protein>
    <recommendedName>
        <fullName evidence="1">Octanoyltransferase</fullName>
        <ecNumber evidence="1">2.3.1.181</ecNumber>
    </recommendedName>
    <alternativeName>
        <fullName evidence="1">Lipoate-protein ligase B</fullName>
    </alternativeName>
    <alternativeName>
        <fullName evidence="1">Lipoyl/octanoyl transferase</fullName>
    </alternativeName>
    <alternativeName>
        <fullName evidence="1">Octanoyl-[acyl-carrier-protein]-protein N-octanoyltransferase</fullName>
    </alternativeName>
</protein>